<gene>
    <name type="ordered locus">XCV3523</name>
</gene>
<reference key="1">
    <citation type="journal article" date="2005" name="J. Bacteriol.">
        <title>Insights into genome plasticity and pathogenicity of the plant pathogenic Bacterium Xanthomonas campestris pv. vesicatoria revealed by the complete genome sequence.</title>
        <authorList>
            <person name="Thieme F."/>
            <person name="Koebnik R."/>
            <person name="Bekel T."/>
            <person name="Berger C."/>
            <person name="Boch J."/>
            <person name="Buettner D."/>
            <person name="Caldana C."/>
            <person name="Gaigalat L."/>
            <person name="Goesmann A."/>
            <person name="Kay S."/>
            <person name="Kirchner O."/>
            <person name="Lanz C."/>
            <person name="Linke B."/>
            <person name="McHardy A.C."/>
            <person name="Meyer F."/>
            <person name="Mittenhuber G."/>
            <person name="Nies D.H."/>
            <person name="Niesbach-Kloesgen U."/>
            <person name="Patschkowski T."/>
            <person name="Rueckert C."/>
            <person name="Rupp O."/>
            <person name="Schneiker S."/>
            <person name="Schuster S.C."/>
            <person name="Vorhoelter F.J."/>
            <person name="Weber E."/>
            <person name="Puehler A."/>
            <person name="Bonas U."/>
            <person name="Bartels D."/>
            <person name="Kaiser O."/>
        </authorList>
    </citation>
    <scope>NUCLEOTIDE SEQUENCE [LARGE SCALE GENOMIC DNA]</scope>
    <source>
        <strain>85-10</strain>
    </source>
</reference>
<protein>
    <recommendedName>
        <fullName evidence="1">UPF0149 protein XCV3523</fullName>
    </recommendedName>
</protein>
<proteinExistence type="inferred from homology"/>
<evidence type="ECO:0000255" key="1">
    <source>
        <dbReference type="HAMAP-Rule" id="MF_00346"/>
    </source>
</evidence>
<feature type="chain" id="PRO_1000013051" description="UPF0149 protein XCV3523">
    <location>
        <begin position="1"/>
        <end position="180"/>
    </location>
</feature>
<comment type="similarity">
    <text evidence="1">Belongs to the UPF0149 family.</text>
</comment>
<sequence>MDLPDVTAVQHESRQLALASSAAELHGGLCGWLSGGGADSADWLARILADSGQVAPQQGGALDQLRQATVAQLEDRDFAFELLLVEDGAPLPARTDALFDWCRAFLGGFGLAAQQRPALSEEGEEALQDLARLAQASSEDFDAADEDDTALAEIEEFVRVAVLLLHGDCVMGPRFRQRLN</sequence>
<accession>Q3BPQ9</accession>
<dbReference type="EMBL" id="AM039952">
    <property type="protein sequence ID" value="CAJ25254.1"/>
    <property type="molecule type" value="Genomic_DNA"/>
</dbReference>
<dbReference type="RefSeq" id="WP_011348467.1">
    <property type="nucleotide sequence ID" value="NZ_CP017190.1"/>
</dbReference>
<dbReference type="SMR" id="Q3BPQ9"/>
<dbReference type="STRING" id="456327.BJD11_05125"/>
<dbReference type="KEGG" id="xcv:XCV3523"/>
<dbReference type="eggNOG" id="COG3079">
    <property type="taxonomic scope" value="Bacteria"/>
</dbReference>
<dbReference type="HOGENOM" id="CLU_085336_0_0_6"/>
<dbReference type="Proteomes" id="UP000007069">
    <property type="component" value="Chromosome"/>
</dbReference>
<dbReference type="GO" id="GO:0005829">
    <property type="term" value="C:cytosol"/>
    <property type="evidence" value="ECO:0007669"/>
    <property type="project" value="TreeGrafter"/>
</dbReference>
<dbReference type="FunFam" id="1.20.120.740:FF:000002">
    <property type="entry name" value="UPF0149 protein XC_0904"/>
    <property type="match status" value="1"/>
</dbReference>
<dbReference type="Gene3D" id="1.20.120.740">
    <property type="entry name" value="YgfB uncharacterised protein family UPF0149, PF03695"/>
    <property type="match status" value="1"/>
</dbReference>
<dbReference type="HAMAP" id="MF_00346">
    <property type="entry name" value="UPF0149"/>
    <property type="match status" value="1"/>
</dbReference>
<dbReference type="InterPro" id="IPR011978">
    <property type="entry name" value="YgfB-like"/>
</dbReference>
<dbReference type="InterPro" id="IPR036255">
    <property type="entry name" value="YgfB-like_sf"/>
</dbReference>
<dbReference type="NCBIfam" id="NF003405">
    <property type="entry name" value="PRK04758.1"/>
    <property type="match status" value="1"/>
</dbReference>
<dbReference type="PANTHER" id="PTHR37528">
    <property type="entry name" value="UPF0149 PROTEIN YGFB"/>
    <property type="match status" value="1"/>
</dbReference>
<dbReference type="PANTHER" id="PTHR37528:SF1">
    <property type="entry name" value="UPF0149 PROTEIN YGFB"/>
    <property type="match status" value="1"/>
</dbReference>
<dbReference type="Pfam" id="PF03695">
    <property type="entry name" value="UPF0149"/>
    <property type="match status" value="1"/>
</dbReference>
<dbReference type="SUPFAM" id="SSF101327">
    <property type="entry name" value="YgfB-like"/>
    <property type="match status" value="1"/>
</dbReference>
<name>Y3523_XANE5</name>
<organism>
    <name type="scientific">Xanthomonas euvesicatoria pv. vesicatoria (strain 85-10)</name>
    <name type="common">Xanthomonas campestris pv. vesicatoria</name>
    <dbReference type="NCBI Taxonomy" id="316273"/>
    <lineage>
        <taxon>Bacteria</taxon>
        <taxon>Pseudomonadati</taxon>
        <taxon>Pseudomonadota</taxon>
        <taxon>Gammaproteobacteria</taxon>
        <taxon>Lysobacterales</taxon>
        <taxon>Lysobacteraceae</taxon>
        <taxon>Xanthomonas</taxon>
    </lineage>
</organism>